<comment type="function">
    <text evidence="1">Catalyzes the N-acylation of UDP-3-O-acylglucosamine using 3-hydroxyacyl-ACP as the acyl donor. Is involved in the biosynthesis of lipid A, a phosphorylated glycolipid that anchors the lipopolysaccharide to the outer membrane of the cell.</text>
</comment>
<comment type="catalytic activity">
    <reaction evidence="1">
        <text>a UDP-3-O-[(3R)-3-hydroxyacyl]-alpha-D-glucosamine + a (3R)-hydroxyacyl-[ACP] = a UDP-2-N,3-O-bis[(3R)-3-hydroxyacyl]-alpha-D-glucosamine + holo-[ACP] + H(+)</text>
        <dbReference type="Rhea" id="RHEA:53836"/>
        <dbReference type="Rhea" id="RHEA-COMP:9685"/>
        <dbReference type="Rhea" id="RHEA-COMP:9945"/>
        <dbReference type="ChEBI" id="CHEBI:15378"/>
        <dbReference type="ChEBI" id="CHEBI:64479"/>
        <dbReference type="ChEBI" id="CHEBI:78827"/>
        <dbReference type="ChEBI" id="CHEBI:137740"/>
        <dbReference type="ChEBI" id="CHEBI:137748"/>
        <dbReference type="EC" id="2.3.1.191"/>
    </reaction>
</comment>
<comment type="pathway">
    <text evidence="1">Bacterial outer membrane biogenesis; LPS lipid A biosynthesis.</text>
</comment>
<comment type="subunit">
    <text evidence="1">Homotrimer.</text>
</comment>
<comment type="similarity">
    <text evidence="1">Belongs to the transferase hexapeptide repeat family. LpxD subfamily.</text>
</comment>
<evidence type="ECO:0000255" key="1">
    <source>
        <dbReference type="HAMAP-Rule" id="MF_00523"/>
    </source>
</evidence>
<keyword id="KW-0012">Acyltransferase</keyword>
<keyword id="KW-0441">Lipid A biosynthesis</keyword>
<keyword id="KW-0444">Lipid biosynthesis</keyword>
<keyword id="KW-0443">Lipid metabolism</keyword>
<keyword id="KW-0677">Repeat</keyword>
<keyword id="KW-0808">Transferase</keyword>
<protein>
    <recommendedName>
        <fullName evidence="1">UDP-3-O-acylglucosamine N-acyltransferase</fullName>
        <ecNumber evidence="1">2.3.1.191</ecNumber>
    </recommendedName>
</protein>
<name>LPXD_CHLPN</name>
<gene>
    <name evidence="1" type="primary">lpxD</name>
    <name type="ordered locus">CPn_0302</name>
    <name type="ordered locus">CP_0456</name>
    <name type="ordered locus">CpB0311</name>
</gene>
<feature type="chain" id="PRO_0000059663" description="UDP-3-O-acylglucosamine N-acyltransferase">
    <location>
        <begin position="1"/>
        <end position="360"/>
    </location>
</feature>
<feature type="active site" description="Proton acceptor" evidence="1">
    <location>
        <position position="248"/>
    </location>
</feature>
<organism>
    <name type="scientific">Chlamydia pneumoniae</name>
    <name type="common">Chlamydophila pneumoniae</name>
    <dbReference type="NCBI Taxonomy" id="83558"/>
    <lineage>
        <taxon>Bacteria</taxon>
        <taxon>Pseudomonadati</taxon>
        <taxon>Chlamydiota</taxon>
        <taxon>Chlamydiia</taxon>
        <taxon>Chlamydiales</taxon>
        <taxon>Chlamydiaceae</taxon>
        <taxon>Chlamydia/Chlamydophila group</taxon>
        <taxon>Chlamydia</taxon>
    </lineage>
</organism>
<dbReference type="EC" id="2.3.1.191" evidence="1"/>
<dbReference type="EMBL" id="AE001363">
    <property type="protein sequence ID" value="AAD18451.1"/>
    <property type="molecule type" value="Genomic_DNA"/>
</dbReference>
<dbReference type="EMBL" id="AE002161">
    <property type="protein sequence ID" value="AAF38294.1"/>
    <property type="molecule type" value="Genomic_DNA"/>
</dbReference>
<dbReference type="EMBL" id="BA000008">
    <property type="protein sequence ID" value="BAA98512.1"/>
    <property type="molecule type" value="Genomic_DNA"/>
</dbReference>
<dbReference type="EMBL" id="AE009440">
    <property type="protein sequence ID" value="AAP98244.1"/>
    <property type="molecule type" value="Genomic_DNA"/>
</dbReference>
<dbReference type="PIR" id="F72094">
    <property type="entry name" value="F72094"/>
</dbReference>
<dbReference type="PIR" id="F86528">
    <property type="entry name" value="F86528"/>
</dbReference>
<dbReference type="RefSeq" id="NP_224507.1">
    <property type="nucleotide sequence ID" value="NC_000922.1"/>
</dbReference>
<dbReference type="RefSeq" id="WP_010882950.1">
    <property type="nucleotide sequence ID" value="NZ_LN847257.1"/>
</dbReference>
<dbReference type="SMR" id="Q9Z8N6"/>
<dbReference type="STRING" id="406984.CPK_ORF00810"/>
<dbReference type="GeneID" id="45050351"/>
<dbReference type="KEGG" id="cpa:CP_0456"/>
<dbReference type="KEGG" id="cpj:lpxD"/>
<dbReference type="KEGG" id="cpn:CPn_0302"/>
<dbReference type="KEGG" id="cpt:CpB0311"/>
<dbReference type="PATRIC" id="fig|115713.3.peg.336"/>
<dbReference type="eggNOG" id="COG1044">
    <property type="taxonomic scope" value="Bacteria"/>
</dbReference>
<dbReference type="HOGENOM" id="CLU_049865_0_1_0"/>
<dbReference type="OMA" id="PAMEIHE"/>
<dbReference type="OrthoDB" id="9784739at2"/>
<dbReference type="UniPathway" id="UPA00973"/>
<dbReference type="Proteomes" id="UP000000583">
    <property type="component" value="Chromosome"/>
</dbReference>
<dbReference type="Proteomes" id="UP000000801">
    <property type="component" value="Chromosome"/>
</dbReference>
<dbReference type="GO" id="GO:0016020">
    <property type="term" value="C:membrane"/>
    <property type="evidence" value="ECO:0007669"/>
    <property type="project" value="GOC"/>
</dbReference>
<dbReference type="GO" id="GO:0016410">
    <property type="term" value="F:N-acyltransferase activity"/>
    <property type="evidence" value="ECO:0007669"/>
    <property type="project" value="InterPro"/>
</dbReference>
<dbReference type="GO" id="GO:0009245">
    <property type="term" value="P:lipid A biosynthetic process"/>
    <property type="evidence" value="ECO:0007669"/>
    <property type="project" value="UniProtKB-UniRule"/>
</dbReference>
<dbReference type="CDD" id="cd03352">
    <property type="entry name" value="LbH_LpxD"/>
    <property type="match status" value="1"/>
</dbReference>
<dbReference type="Gene3D" id="1.20.5.170">
    <property type="match status" value="1"/>
</dbReference>
<dbReference type="Gene3D" id="2.160.10.10">
    <property type="entry name" value="Hexapeptide repeat proteins"/>
    <property type="match status" value="1"/>
</dbReference>
<dbReference type="Gene3D" id="3.40.1390.10">
    <property type="entry name" value="MurE/MurF, N-terminal domain"/>
    <property type="match status" value="1"/>
</dbReference>
<dbReference type="HAMAP" id="MF_00523">
    <property type="entry name" value="LpxD"/>
    <property type="match status" value="1"/>
</dbReference>
<dbReference type="InterPro" id="IPR001451">
    <property type="entry name" value="Hexapep"/>
</dbReference>
<dbReference type="InterPro" id="IPR007691">
    <property type="entry name" value="LpxD"/>
</dbReference>
<dbReference type="InterPro" id="IPR011004">
    <property type="entry name" value="Trimer_LpxA-like_sf"/>
</dbReference>
<dbReference type="InterPro" id="IPR020573">
    <property type="entry name" value="UDP_GlcNAc_AcTrfase_non-rep"/>
</dbReference>
<dbReference type="NCBIfam" id="TIGR01853">
    <property type="entry name" value="lipid_A_lpxD"/>
    <property type="match status" value="1"/>
</dbReference>
<dbReference type="NCBIfam" id="NF002060">
    <property type="entry name" value="PRK00892.1"/>
    <property type="match status" value="1"/>
</dbReference>
<dbReference type="PANTHER" id="PTHR43378">
    <property type="entry name" value="UDP-3-O-ACYLGLUCOSAMINE N-ACYLTRANSFERASE"/>
    <property type="match status" value="1"/>
</dbReference>
<dbReference type="PANTHER" id="PTHR43378:SF2">
    <property type="entry name" value="UDP-3-O-ACYLGLUCOSAMINE N-ACYLTRANSFERASE 1, MITOCHONDRIAL-RELATED"/>
    <property type="match status" value="1"/>
</dbReference>
<dbReference type="Pfam" id="PF00132">
    <property type="entry name" value="Hexapep"/>
    <property type="match status" value="3"/>
</dbReference>
<dbReference type="Pfam" id="PF04613">
    <property type="entry name" value="LpxD"/>
    <property type="match status" value="1"/>
</dbReference>
<dbReference type="SUPFAM" id="SSF51161">
    <property type="entry name" value="Trimeric LpxA-like enzymes"/>
    <property type="match status" value="1"/>
</dbReference>
<reference key="1">
    <citation type="journal article" date="1999" name="Nat. Genet.">
        <title>Comparative genomes of Chlamydia pneumoniae and C. trachomatis.</title>
        <authorList>
            <person name="Kalman S."/>
            <person name="Mitchell W.P."/>
            <person name="Marathe R."/>
            <person name="Lammel C.J."/>
            <person name="Fan J."/>
            <person name="Hyman R.W."/>
            <person name="Olinger L."/>
            <person name="Grimwood J."/>
            <person name="Davis R.W."/>
            <person name="Stephens R.S."/>
        </authorList>
    </citation>
    <scope>NUCLEOTIDE SEQUENCE [LARGE SCALE GENOMIC DNA]</scope>
    <source>
        <strain>CWL029</strain>
    </source>
</reference>
<reference key="2">
    <citation type="journal article" date="2000" name="Nucleic Acids Res.">
        <title>Genome sequences of Chlamydia trachomatis MoPn and Chlamydia pneumoniae AR39.</title>
        <authorList>
            <person name="Read T.D."/>
            <person name="Brunham R.C."/>
            <person name="Shen C."/>
            <person name="Gill S.R."/>
            <person name="Heidelberg J.F."/>
            <person name="White O."/>
            <person name="Hickey E.K."/>
            <person name="Peterson J.D."/>
            <person name="Utterback T.R."/>
            <person name="Berry K.J."/>
            <person name="Bass S."/>
            <person name="Linher K.D."/>
            <person name="Weidman J.F."/>
            <person name="Khouri H.M."/>
            <person name="Craven B."/>
            <person name="Bowman C."/>
            <person name="Dodson R.J."/>
            <person name="Gwinn M.L."/>
            <person name="Nelson W.C."/>
            <person name="DeBoy R.T."/>
            <person name="Kolonay J.F."/>
            <person name="McClarty G."/>
            <person name="Salzberg S.L."/>
            <person name="Eisen J.A."/>
            <person name="Fraser C.M."/>
        </authorList>
    </citation>
    <scope>NUCLEOTIDE SEQUENCE [LARGE SCALE GENOMIC DNA]</scope>
    <source>
        <strain>AR39</strain>
    </source>
</reference>
<reference key="3">
    <citation type="journal article" date="2000" name="Nucleic Acids Res.">
        <title>Comparison of whole genome sequences of Chlamydia pneumoniae J138 from Japan and CWL029 from USA.</title>
        <authorList>
            <person name="Shirai M."/>
            <person name="Hirakawa H."/>
            <person name="Kimoto M."/>
            <person name="Tabuchi M."/>
            <person name="Kishi F."/>
            <person name="Ouchi K."/>
            <person name="Shiba T."/>
            <person name="Ishii K."/>
            <person name="Hattori M."/>
            <person name="Kuhara S."/>
            <person name="Nakazawa T."/>
        </authorList>
    </citation>
    <scope>NUCLEOTIDE SEQUENCE [LARGE SCALE GENOMIC DNA]</scope>
    <source>
        <strain>J138</strain>
    </source>
</reference>
<reference key="4">
    <citation type="submission" date="2002-05" db="EMBL/GenBank/DDBJ databases">
        <title>The genome sequence of Chlamydia pneumoniae TW183 and comparison with other Chlamydia strains based on whole genome sequence analysis.</title>
        <authorList>
            <person name="Geng M.M."/>
            <person name="Schuhmacher A."/>
            <person name="Muehldorfer I."/>
            <person name="Bensch K.W."/>
            <person name="Schaefer K.P."/>
            <person name="Schneider S."/>
            <person name="Pohl T."/>
            <person name="Essig A."/>
            <person name="Marre R."/>
            <person name="Melchers K."/>
        </authorList>
    </citation>
    <scope>NUCLEOTIDE SEQUENCE [LARGE SCALE GENOMIC DNA]</scope>
    <source>
        <strain>TW-183</strain>
    </source>
</reference>
<proteinExistence type="inferred from homology"/>
<sequence length="360" mass="38847">MSEAPVYTLKQLAELLQVEVQGNIETPISGVEDISQAQPHHIAFLDNEKYSSFLKNTKAGAIILSRSQAMQHAHLKKNFLITNESPSLTFQKCIELFIEPVTSGFPGIHPTAVIHPTARIEKNVTIEPYVVISQHAHIGSDTYIGAGSVIGAHSVLGANCLIHPKVVIRERVLMGNRVVVQPGAVLGSCGFGYITNAFGHHKPLKHLGYVIVGDDVEIGANTTIDRGRFKNTVIHEGTKIDNQVQVAHHVEIGKHSIIVAQAGIAGSTKIGEHVIIGGQTGITGHISIADHVIMIAQTGVTKSITSPGIYGGAPARPYQETHRLIAKIRNLPKTEERLSKLEKQVRDLSTPSLAEIPSEI</sequence>
<accession>Q9Z8N6</accession>